<accession>Q65JC5</accession>
<accession>Q62UT3</accession>
<gene>
    <name type="ordered locus">BLi01945</name>
    <name type="ordered locus">BL05168</name>
</gene>
<proteinExistence type="inferred from homology"/>
<evidence type="ECO:0000255" key="1">
    <source>
        <dbReference type="HAMAP-Rule" id="MF_00338"/>
    </source>
</evidence>
<name>Y5168_BACLD</name>
<comment type="similarity">
    <text evidence="1">Belongs to the UPF0145 family.</text>
</comment>
<keyword id="KW-1185">Reference proteome</keyword>
<dbReference type="EMBL" id="AE017333">
    <property type="protein sequence ID" value="AAU40839.1"/>
    <property type="molecule type" value="Genomic_DNA"/>
</dbReference>
<dbReference type="EMBL" id="CP000002">
    <property type="protein sequence ID" value="AAU23476.1"/>
    <property type="molecule type" value="Genomic_DNA"/>
</dbReference>
<dbReference type="RefSeq" id="WP_003182008.1">
    <property type="nucleotide sequence ID" value="NC_006322.1"/>
</dbReference>
<dbReference type="SMR" id="Q65JC5"/>
<dbReference type="KEGG" id="bld:BLi01945"/>
<dbReference type="KEGG" id="bli:BL05168"/>
<dbReference type="eggNOG" id="COG0393">
    <property type="taxonomic scope" value="Bacteria"/>
</dbReference>
<dbReference type="HOGENOM" id="CLU_117144_1_2_9"/>
<dbReference type="BRENDA" id="2.4.1.384">
    <property type="organism ID" value="669"/>
</dbReference>
<dbReference type="Proteomes" id="UP000000606">
    <property type="component" value="Chromosome"/>
</dbReference>
<dbReference type="Gene3D" id="3.30.110.70">
    <property type="entry name" value="Hypothetical protein apc22750. Chain B"/>
    <property type="match status" value="1"/>
</dbReference>
<dbReference type="HAMAP" id="MF_00338">
    <property type="entry name" value="UPF0145"/>
    <property type="match status" value="1"/>
</dbReference>
<dbReference type="InterPro" id="IPR035439">
    <property type="entry name" value="UPF0145_dom_sf"/>
</dbReference>
<dbReference type="InterPro" id="IPR002765">
    <property type="entry name" value="UPF0145_YbjQ-like"/>
</dbReference>
<dbReference type="PANTHER" id="PTHR34068:SF2">
    <property type="entry name" value="UPF0145 PROTEIN SCO3412"/>
    <property type="match status" value="1"/>
</dbReference>
<dbReference type="PANTHER" id="PTHR34068">
    <property type="entry name" value="UPF0145 PROTEIN YBJQ"/>
    <property type="match status" value="1"/>
</dbReference>
<dbReference type="Pfam" id="PF01906">
    <property type="entry name" value="YbjQ_1"/>
    <property type="match status" value="1"/>
</dbReference>
<dbReference type="SUPFAM" id="SSF117782">
    <property type="entry name" value="YbjQ-like"/>
    <property type="match status" value="1"/>
</dbReference>
<organism>
    <name type="scientific">Bacillus licheniformis (strain ATCC 14580 / DSM 13 / JCM 2505 / CCUG 7422 / NBRC 12200 / NCIMB 9375 / NCTC 10341 / NRRL NRS-1264 / Gibson 46)</name>
    <dbReference type="NCBI Taxonomy" id="279010"/>
    <lineage>
        <taxon>Bacteria</taxon>
        <taxon>Bacillati</taxon>
        <taxon>Bacillota</taxon>
        <taxon>Bacilli</taxon>
        <taxon>Bacillales</taxon>
        <taxon>Bacillaceae</taxon>
        <taxon>Bacillus</taxon>
    </lineage>
</organism>
<sequence>MIIVTTDTIANQNIVEVKGLVTSSIVQSRNIGKDILSGLKSVIGGELKNYTQMLEDSKKAVRERLVNQAEELGANAIVGLRFELSAGQGTSELIGYGTAVVIG</sequence>
<reference key="1">
    <citation type="journal article" date="2004" name="J. Mol. Microbiol. Biotechnol.">
        <title>The complete genome sequence of Bacillus licheniformis DSM13, an organism with great industrial potential.</title>
        <authorList>
            <person name="Veith B."/>
            <person name="Herzberg C."/>
            <person name="Steckel S."/>
            <person name="Feesche J."/>
            <person name="Maurer K.H."/>
            <person name="Ehrenreich P."/>
            <person name="Baeumer S."/>
            <person name="Henne A."/>
            <person name="Liesegang H."/>
            <person name="Merkl R."/>
            <person name="Ehrenreich A."/>
            <person name="Gottschalk G."/>
        </authorList>
    </citation>
    <scope>NUCLEOTIDE SEQUENCE [LARGE SCALE GENOMIC DNA]</scope>
    <source>
        <strain>ATCC 14580 / DSM 13 / JCM 2505 / CCUG 7422 / NBRC 12200 / NCIMB 9375 / NCTC 10341 / NRRL NRS-1264 / Gibson 46</strain>
    </source>
</reference>
<reference key="2">
    <citation type="journal article" date="2004" name="Genome Biol.">
        <title>Complete genome sequence of the industrial bacterium Bacillus licheniformis and comparisons with closely related Bacillus species.</title>
        <authorList>
            <person name="Rey M.W."/>
            <person name="Ramaiya P."/>
            <person name="Nelson B.A."/>
            <person name="Brody-Karpin S.D."/>
            <person name="Zaretsky E.J."/>
            <person name="Tang M."/>
            <person name="Lopez de Leon A."/>
            <person name="Xiang H."/>
            <person name="Gusti V."/>
            <person name="Clausen I.G."/>
            <person name="Olsen P.B."/>
            <person name="Rasmussen M.D."/>
            <person name="Andersen J.T."/>
            <person name="Joergensen P.L."/>
            <person name="Larsen T.S."/>
            <person name="Sorokin A."/>
            <person name="Bolotin A."/>
            <person name="Lapidus A."/>
            <person name="Galleron N."/>
            <person name="Ehrlich S.D."/>
            <person name="Berka R.M."/>
        </authorList>
    </citation>
    <scope>NUCLEOTIDE SEQUENCE [LARGE SCALE GENOMIC DNA]</scope>
    <source>
        <strain>ATCC 14580 / DSM 13 / JCM 2505 / CCUG 7422 / NBRC 12200 / NCIMB 9375 / NCTC 10341 / NRRL NRS-1264 / Gibson 46</strain>
    </source>
</reference>
<feature type="chain" id="PRO_0000225809" description="UPF0145 protein BLi01945/BL05168">
    <location>
        <begin position="1"/>
        <end position="103"/>
    </location>
</feature>
<protein>
    <recommendedName>
        <fullName evidence="1">UPF0145 protein BLi01945/BL05168</fullName>
    </recommendedName>
</protein>